<gene>
    <name evidence="1" type="primary">thrB</name>
    <name type="ordered locus">stu0470</name>
</gene>
<protein>
    <recommendedName>
        <fullName evidence="1">Homoserine kinase</fullName>
        <shortName evidence="1">HK</shortName>
        <shortName evidence="1">HSK</shortName>
        <ecNumber evidence="1">2.7.1.39</ecNumber>
    </recommendedName>
</protein>
<feature type="chain" id="PRO_1000049179" description="Homoserine kinase">
    <location>
        <begin position="1"/>
        <end position="286"/>
    </location>
</feature>
<feature type="binding site" evidence="1">
    <location>
        <begin position="78"/>
        <end position="88"/>
    </location>
    <ligand>
        <name>ATP</name>
        <dbReference type="ChEBI" id="CHEBI:30616"/>
    </ligand>
</feature>
<evidence type="ECO:0000255" key="1">
    <source>
        <dbReference type="HAMAP-Rule" id="MF_00384"/>
    </source>
</evidence>
<keyword id="KW-0028">Amino-acid biosynthesis</keyword>
<keyword id="KW-0067">ATP-binding</keyword>
<keyword id="KW-0963">Cytoplasm</keyword>
<keyword id="KW-0418">Kinase</keyword>
<keyword id="KW-0547">Nucleotide-binding</keyword>
<keyword id="KW-1185">Reference proteome</keyword>
<keyword id="KW-0791">Threonine biosynthesis</keyword>
<keyword id="KW-0808">Transferase</keyword>
<dbReference type="EC" id="2.7.1.39" evidence="1"/>
<dbReference type="EMBL" id="CP000023">
    <property type="protein sequence ID" value="AAV60180.1"/>
    <property type="molecule type" value="Genomic_DNA"/>
</dbReference>
<dbReference type="RefSeq" id="WP_011225586.1">
    <property type="nucleotide sequence ID" value="NC_006448.1"/>
</dbReference>
<dbReference type="SMR" id="Q5M5K5"/>
<dbReference type="STRING" id="264199.stu0470"/>
<dbReference type="DNASU" id="3165224"/>
<dbReference type="KEGG" id="stl:stu0470"/>
<dbReference type="PATRIC" id="fig|264199.4.peg.473"/>
<dbReference type="eggNOG" id="COG0083">
    <property type="taxonomic scope" value="Bacteria"/>
</dbReference>
<dbReference type="HOGENOM" id="CLU_041243_0_0_9"/>
<dbReference type="UniPathway" id="UPA00050">
    <property type="reaction ID" value="UER00064"/>
</dbReference>
<dbReference type="Proteomes" id="UP000001170">
    <property type="component" value="Chromosome"/>
</dbReference>
<dbReference type="GO" id="GO:0005737">
    <property type="term" value="C:cytoplasm"/>
    <property type="evidence" value="ECO:0007669"/>
    <property type="project" value="UniProtKB-SubCell"/>
</dbReference>
<dbReference type="GO" id="GO:0005524">
    <property type="term" value="F:ATP binding"/>
    <property type="evidence" value="ECO:0007669"/>
    <property type="project" value="UniProtKB-UniRule"/>
</dbReference>
<dbReference type="GO" id="GO:0004413">
    <property type="term" value="F:homoserine kinase activity"/>
    <property type="evidence" value="ECO:0007669"/>
    <property type="project" value="UniProtKB-UniRule"/>
</dbReference>
<dbReference type="GO" id="GO:0009088">
    <property type="term" value="P:threonine biosynthetic process"/>
    <property type="evidence" value="ECO:0007669"/>
    <property type="project" value="UniProtKB-UniRule"/>
</dbReference>
<dbReference type="Gene3D" id="3.30.230.10">
    <property type="match status" value="1"/>
</dbReference>
<dbReference type="Gene3D" id="3.30.70.890">
    <property type="entry name" value="GHMP kinase, C-terminal domain"/>
    <property type="match status" value="1"/>
</dbReference>
<dbReference type="HAMAP" id="MF_00384">
    <property type="entry name" value="Homoser_kinase"/>
    <property type="match status" value="1"/>
</dbReference>
<dbReference type="InterPro" id="IPR013750">
    <property type="entry name" value="GHMP_kinase_C_dom"/>
</dbReference>
<dbReference type="InterPro" id="IPR036554">
    <property type="entry name" value="GHMP_kinase_C_sf"/>
</dbReference>
<dbReference type="InterPro" id="IPR006204">
    <property type="entry name" value="GHMP_kinase_N_dom"/>
</dbReference>
<dbReference type="InterPro" id="IPR006203">
    <property type="entry name" value="GHMP_knse_ATP-bd_CS"/>
</dbReference>
<dbReference type="InterPro" id="IPR000870">
    <property type="entry name" value="Homoserine_kinase"/>
</dbReference>
<dbReference type="InterPro" id="IPR020568">
    <property type="entry name" value="Ribosomal_Su5_D2-typ_SF"/>
</dbReference>
<dbReference type="InterPro" id="IPR014721">
    <property type="entry name" value="Ribsml_uS5_D2-typ_fold_subgr"/>
</dbReference>
<dbReference type="NCBIfam" id="TIGR00191">
    <property type="entry name" value="thrB"/>
    <property type="match status" value="1"/>
</dbReference>
<dbReference type="PANTHER" id="PTHR20861:SF1">
    <property type="entry name" value="HOMOSERINE KINASE"/>
    <property type="match status" value="1"/>
</dbReference>
<dbReference type="PANTHER" id="PTHR20861">
    <property type="entry name" value="HOMOSERINE/4-DIPHOSPHOCYTIDYL-2-C-METHYL-D-ERYTHRITOL KINASE"/>
    <property type="match status" value="1"/>
</dbReference>
<dbReference type="Pfam" id="PF08544">
    <property type="entry name" value="GHMP_kinases_C"/>
    <property type="match status" value="1"/>
</dbReference>
<dbReference type="Pfam" id="PF00288">
    <property type="entry name" value="GHMP_kinases_N"/>
    <property type="match status" value="1"/>
</dbReference>
<dbReference type="PIRSF" id="PIRSF000676">
    <property type="entry name" value="Homoser_kin"/>
    <property type="match status" value="1"/>
</dbReference>
<dbReference type="PRINTS" id="PR00958">
    <property type="entry name" value="HOMSERKINASE"/>
</dbReference>
<dbReference type="SUPFAM" id="SSF55060">
    <property type="entry name" value="GHMP Kinase, C-terminal domain"/>
    <property type="match status" value="1"/>
</dbReference>
<dbReference type="SUPFAM" id="SSF54211">
    <property type="entry name" value="Ribosomal protein S5 domain 2-like"/>
    <property type="match status" value="1"/>
</dbReference>
<dbReference type="PROSITE" id="PS00627">
    <property type="entry name" value="GHMP_KINASES_ATP"/>
    <property type="match status" value="1"/>
</dbReference>
<reference key="1">
    <citation type="journal article" date="2004" name="Nat. Biotechnol.">
        <title>Complete sequence and comparative genome analysis of the dairy bacterium Streptococcus thermophilus.</title>
        <authorList>
            <person name="Bolotin A."/>
            <person name="Quinquis B."/>
            <person name="Renault P."/>
            <person name="Sorokin A."/>
            <person name="Ehrlich S.D."/>
            <person name="Kulakauskas S."/>
            <person name="Lapidus A."/>
            <person name="Goltsman E."/>
            <person name="Mazur M."/>
            <person name="Pusch G.D."/>
            <person name="Fonstein M."/>
            <person name="Overbeek R."/>
            <person name="Kyprides N."/>
            <person name="Purnelle B."/>
            <person name="Prozzi D."/>
            <person name="Ngui K."/>
            <person name="Masuy D."/>
            <person name="Hancy F."/>
            <person name="Burteau S."/>
            <person name="Boutry M."/>
            <person name="Delcour J."/>
            <person name="Goffeau A."/>
            <person name="Hols P."/>
        </authorList>
    </citation>
    <scope>NUCLEOTIDE SEQUENCE [LARGE SCALE GENOMIC DNA]</scope>
    <source>
        <strain>ATCC BAA-250 / LMG 18311</strain>
    </source>
</reference>
<comment type="function">
    <text evidence="1">Catalyzes the ATP-dependent phosphorylation of L-homoserine to L-homoserine phosphate.</text>
</comment>
<comment type="catalytic activity">
    <reaction evidence="1">
        <text>L-homoserine + ATP = O-phospho-L-homoserine + ADP + H(+)</text>
        <dbReference type="Rhea" id="RHEA:13985"/>
        <dbReference type="ChEBI" id="CHEBI:15378"/>
        <dbReference type="ChEBI" id="CHEBI:30616"/>
        <dbReference type="ChEBI" id="CHEBI:57476"/>
        <dbReference type="ChEBI" id="CHEBI:57590"/>
        <dbReference type="ChEBI" id="CHEBI:456216"/>
        <dbReference type="EC" id="2.7.1.39"/>
    </reaction>
</comment>
<comment type="pathway">
    <text evidence="1">Amino-acid biosynthesis; L-threonine biosynthesis; L-threonine from L-aspartate: step 4/5.</text>
</comment>
<comment type="subcellular location">
    <subcellularLocation>
        <location evidence="1">Cytoplasm</location>
    </subcellularLocation>
</comment>
<comment type="similarity">
    <text evidence="1">Belongs to the GHMP kinase family. Homoserine kinase subfamily.</text>
</comment>
<name>KHSE_STRT2</name>
<organism>
    <name type="scientific">Streptococcus thermophilus (strain ATCC BAA-250 / LMG 18311)</name>
    <dbReference type="NCBI Taxonomy" id="264199"/>
    <lineage>
        <taxon>Bacteria</taxon>
        <taxon>Bacillati</taxon>
        <taxon>Bacillota</taxon>
        <taxon>Bacilli</taxon>
        <taxon>Lactobacillales</taxon>
        <taxon>Streptococcaceae</taxon>
        <taxon>Streptococcus</taxon>
    </lineage>
</organism>
<accession>Q5M5K5</accession>
<proteinExistence type="inferred from homology"/>
<sequence length="286" mass="30219">MKITVPATSANIGPGFDSVGVAVSKYLTIEVLEPADVWFIEHDLGDIPSDENNLLISTALQVKSDLQPHKLVMASDIPLARGLGSSSSVIVAGIELANQLADLKLSDDDKLDIATKIEGHPDNVAPAIFGNLVVASYVDEHVNSIVTEFPECAFVAFIPSYELKTSESRGVLPSDLSYKDAVAASSIANVAIAALFAGDLVKAGRAIQGDMFHERYRQKLVKEFVTIKELSGQYGAYATYLSGAGPTVMTLTPNDQAEALKTAIDGIGLDGETLILSVDKGGVVVD</sequence>